<keyword id="KW-0963">Cytoplasm</keyword>
<keyword id="KW-0251">Elongation factor</keyword>
<keyword id="KW-0648">Protein biosynthesis</keyword>
<proteinExistence type="inferred from homology"/>
<evidence type="ECO:0000255" key="1">
    <source>
        <dbReference type="HAMAP-Rule" id="MF_00050"/>
    </source>
</evidence>
<name>EFTS_MYCLB</name>
<sequence>MANFTVADVKRLRALTGAGMLDCKSVLVETDGNFDKAVESLRIKGAKDVGKRAERATAEGLVAAKDGALIELNCETDFVAKNAEFQKLANQIVGVVAAAKIVDVDALKGASVGDKTVEQAIAELAAKIGEKLKLRRAAIFNGTVATYLHKRAADLPPAVGVLVEYGAGTDAANSTAAAHAAALQIAALKARFLSRDDVPEDVLASERRIAEETAKAAGKPEQSLPKIVEGRLNGFFKDSVLLEQPSVFDNKKTVKVLLDEAGVTVTRFVRFEVGQA</sequence>
<comment type="function">
    <text evidence="1">Associates with the EF-Tu.GDP complex and induces the exchange of GDP to GTP. It remains bound to the aminoacyl-tRNA.EF-Tu.GTP complex up to the GTP hydrolysis stage on the ribosome.</text>
</comment>
<comment type="subcellular location">
    <subcellularLocation>
        <location evidence="1">Cytoplasm</location>
    </subcellularLocation>
</comment>
<comment type="similarity">
    <text evidence="1">Belongs to the EF-Ts family.</text>
</comment>
<dbReference type="EMBL" id="FM211192">
    <property type="protein sequence ID" value="CAR71692.1"/>
    <property type="molecule type" value="Genomic_DNA"/>
</dbReference>
<dbReference type="SMR" id="B8ZRV3"/>
<dbReference type="KEGG" id="mlb:MLBr01597"/>
<dbReference type="HOGENOM" id="CLU_047155_0_0_11"/>
<dbReference type="Proteomes" id="UP000006900">
    <property type="component" value="Chromosome"/>
</dbReference>
<dbReference type="GO" id="GO:0005737">
    <property type="term" value="C:cytoplasm"/>
    <property type="evidence" value="ECO:0007669"/>
    <property type="project" value="UniProtKB-SubCell"/>
</dbReference>
<dbReference type="GO" id="GO:0003746">
    <property type="term" value="F:translation elongation factor activity"/>
    <property type="evidence" value="ECO:0007669"/>
    <property type="project" value="UniProtKB-UniRule"/>
</dbReference>
<dbReference type="CDD" id="cd14275">
    <property type="entry name" value="UBA_EF-Ts"/>
    <property type="match status" value="1"/>
</dbReference>
<dbReference type="FunFam" id="1.10.286.20:FF:000001">
    <property type="entry name" value="Elongation factor Ts"/>
    <property type="match status" value="1"/>
</dbReference>
<dbReference type="FunFam" id="1.10.8.10:FF:000001">
    <property type="entry name" value="Elongation factor Ts"/>
    <property type="match status" value="1"/>
</dbReference>
<dbReference type="Gene3D" id="1.10.286.20">
    <property type="match status" value="1"/>
</dbReference>
<dbReference type="Gene3D" id="1.10.8.10">
    <property type="entry name" value="DNA helicase RuvA subunit, C-terminal domain"/>
    <property type="match status" value="1"/>
</dbReference>
<dbReference type="Gene3D" id="3.30.479.20">
    <property type="entry name" value="Elongation factor Ts, dimerisation domain"/>
    <property type="match status" value="2"/>
</dbReference>
<dbReference type="HAMAP" id="MF_00050">
    <property type="entry name" value="EF_Ts"/>
    <property type="match status" value="1"/>
</dbReference>
<dbReference type="InterPro" id="IPR036402">
    <property type="entry name" value="EF-Ts_dimer_sf"/>
</dbReference>
<dbReference type="InterPro" id="IPR001816">
    <property type="entry name" value="Transl_elong_EFTs/EF1B"/>
</dbReference>
<dbReference type="InterPro" id="IPR014039">
    <property type="entry name" value="Transl_elong_EFTs/EF1B_dimer"/>
</dbReference>
<dbReference type="InterPro" id="IPR018101">
    <property type="entry name" value="Transl_elong_Ts_CS"/>
</dbReference>
<dbReference type="InterPro" id="IPR009060">
    <property type="entry name" value="UBA-like_sf"/>
</dbReference>
<dbReference type="NCBIfam" id="TIGR00116">
    <property type="entry name" value="tsf"/>
    <property type="match status" value="1"/>
</dbReference>
<dbReference type="PANTHER" id="PTHR11741">
    <property type="entry name" value="ELONGATION FACTOR TS"/>
    <property type="match status" value="1"/>
</dbReference>
<dbReference type="PANTHER" id="PTHR11741:SF0">
    <property type="entry name" value="ELONGATION FACTOR TS, MITOCHONDRIAL"/>
    <property type="match status" value="1"/>
</dbReference>
<dbReference type="Pfam" id="PF00889">
    <property type="entry name" value="EF_TS"/>
    <property type="match status" value="1"/>
</dbReference>
<dbReference type="SUPFAM" id="SSF54713">
    <property type="entry name" value="Elongation factor Ts (EF-Ts), dimerisation domain"/>
    <property type="match status" value="2"/>
</dbReference>
<dbReference type="SUPFAM" id="SSF46934">
    <property type="entry name" value="UBA-like"/>
    <property type="match status" value="1"/>
</dbReference>
<dbReference type="PROSITE" id="PS01126">
    <property type="entry name" value="EF_TS_1"/>
    <property type="match status" value="1"/>
</dbReference>
<dbReference type="PROSITE" id="PS01127">
    <property type="entry name" value="EF_TS_2"/>
    <property type="match status" value="1"/>
</dbReference>
<protein>
    <recommendedName>
        <fullName evidence="1">Elongation factor Ts</fullName>
        <shortName evidence="1">EF-Ts</shortName>
    </recommendedName>
</protein>
<accession>B8ZRV3</accession>
<feature type="chain" id="PRO_1000117592" description="Elongation factor Ts">
    <location>
        <begin position="1"/>
        <end position="276"/>
    </location>
</feature>
<feature type="region of interest" description="Involved in Mg(2+) ion dislocation from EF-Tu" evidence="1">
    <location>
        <begin position="76"/>
        <end position="79"/>
    </location>
</feature>
<reference key="1">
    <citation type="journal article" date="2009" name="Nat. Genet.">
        <title>Comparative genomic and phylogeographic analysis of Mycobacterium leprae.</title>
        <authorList>
            <person name="Monot M."/>
            <person name="Honore N."/>
            <person name="Garnier T."/>
            <person name="Zidane N."/>
            <person name="Sherafi D."/>
            <person name="Paniz-Mondolfi A."/>
            <person name="Matsuoka M."/>
            <person name="Taylor G.M."/>
            <person name="Donoghue H.D."/>
            <person name="Bouwman A."/>
            <person name="Mays S."/>
            <person name="Watson C."/>
            <person name="Lockwood D."/>
            <person name="Khamispour A."/>
            <person name="Dowlati Y."/>
            <person name="Jianping S."/>
            <person name="Rea T.H."/>
            <person name="Vera-Cabrera L."/>
            <person name="Stefani M.M."/>
            <person name="Banu S."/>
            <person name="Macdonald M."/>
            <person name="Sapkota B.R."/>
            <person name="Spencer J.S."/>
            <person name="Thomas J."/>
            <person name="Harshman K."/>
            <person name="Singh P."/>
            <person name="Busso P."/>
            <person name="Gattiker A."/>
            <person name="Rougemont J."/>
            <person name="Brennan P.J."/>
            <person name="Cole S.T."/>
        </authorList>
    </citation>
    <scope>NUCLEOTIDE SEQUENCE [LARGE SCALE GENOMIC DNA]</scope>
    <source>
        <strain>Br4923</strain>
    </source>
</reference>
<organism>
    <name type="scientific">Mycobacterium leprae (strain Br4923)</name>
    <dbReference type="NCBI Taxonomy" id="561304"/>
    <lineage>
        <taxon>Bacteria</taxon>
        <taxon>Bacillati</taxon>
        <taxon>Actinomycetota</taxon>
        <taxon>Actinomycetes</taxon>
        <taxon>Mycobacteriales</taxon>
        <taxon>Mycobacteriaceae</taxon>
        <taxon>Mycobacterium</taxon>
    </lineage>
</organism>
<gene>
    <name evidence="1" type="primary">tsf</name>
    <name type="ordered locus">MLBr01597</name>
</gene>